<name>RS5_CHLTR</name>
<sequence length="165" mass="17762">MTLSRNSHKEDQLEEKVLVVNRCCKVVKGGRKFSFSALILVGDRKGRLGFGFAKANELTDAIRKGGDAARKNLVSINSLEGGSIPHEVLVNHDGAELLLKPAKPGTGIVAGSRIRLILEMAGVKDIVAKSLGSNNPMNQVKAAFKALLTLSCKDDIMKRRAVIND</sequence>
<feature type="chain" id="PRO_0000131500" description="Small ribosomal subunit protein uS5">
    <location>
        <begin position="1"/>
        <end position="165"/>
    </location>
</feature>
<feature type="domain" description="S5 DRBM" evidence="1">
    <location>
        <begin position="13"/>
        <end position="76"/>
    </location>
</feature>
<accession>P0A4C8</accession>
<accession>P28543</accession>
<protein>
    <recommendedName>
        <fullName evidence="1">Small ribosomal subunit protein uS5</fullName>
    </recommendedName>
    <alternativeName>
        <fullName evidence="2">30S ribosomal protein S5</fullName>
    </alternativeName>
</protein>
<proteinExistence type="inferred from homology"/>
<gene>
    <name evidence="1" type="primary">rpsE</name>
    <name type="synonym">rs5</name>
    <name type="ordered locus">CT_512</name>
</gene>
<keyword id="KW-1185">Reference proteome</keyword>
<keyword id="KW-0687">Ribonucleoprotein</keyword>
<keyword id="KW-0689">Ribosomal protein</keyword>
<keyword id="KW-0694">RNA-binding</keyword>
<keyword id="KW-0699">rRNA-binding</keyword>
<comment type="function">
    <text evidence="1">With S4 and S12 plays an important role in translational accuracy.</text>
</comment>
<comment type="function">
    <text evidence="1">Located at the back of the 30S subunit body where it stabilizes the conformation of the head with respect to the body.</text>
</comment>
<comment type="subunit">
    <text evidence="1">Part of the 30S ribosomal subunit. Contacts proteins S4 and S8.</text>
</comment>
<comment type="domain">
    <text>The N-terminal domain interacts with the head of the 30S subunit; the C-terminal domain interacts with the body and contacts protein S4. The interaction surface between S4 and S5 is involved in control of translational fidelity.</text>
</comment>
<comment type="similarity">
    <text evidence="1">Belongs to the universal ribosomal protein uS5 family.</text>
</comment>
<evidence type="ECO:0000255" key="1">
    <source>
        <dbReference type="HAMAP-Rule" id="MF_01307"/>
    </source>
</evidence>
<evidence type="ECO:0000305" key="2"/>
<dbReference type="EMBL" id="M80325">
    <property type="protein sequence ID" value="AAA23178.1"/>
    <property type="molecule type" value="Genomic_DNA"/>
</dbReference>
<dbReference type="EMBL" id="AE001273">
    <property type="protein sequence ID" value="AAC68113.1"/>
    <property type="molecule type" value="Genomic_DNA"/>
</dbReference>
<dbReference type="PIR" id="A45192">
    <property type="entry name" value="A45192"/>
</dbReference>
<dbReference type="RefSeq" id="NP_220027.1">
    <property type="nucleotide sequence ID" value="NC_000117.1"/>
</dbReference>
<dbReference type="RefSeq" id="WP_009871876.1">
    <property type="nucleotide sequence ID" value="NC_000117.1"/>
</dbReference>
<dbReference type="SMR" id="P0A4C8"/>
<dbReference type="FunCoup" id="P0A4C8">
    <property type="interactions" value="283"/>
</dbReference>
<dbReference type="STRING" id="272561.CT_512"/>
<dbReference type="EnsemblBacteria" id="AAC68113">
    <property type="protein sequence ID" value="AAC68113"/>
    <property type="gene ID" value="CT_512"/>
</dbReference>
<dbReference type="GeneID" id="1246166"/>
<dbReference type="GeneID" id="884297"/>
<dbReference type="KEGG" id="ctr:CT_512"/>
<dbReference type="PATRIC" id="fig|272561.5.peg.556"/>
<dbReference type="HOGENOM" id="CLU_065898_2_2_0"/>
<dbReference type="InParanoid" id="P0A4C8"/>
<dbReference type="OrthoDB" id="9809045at2"/>
<dbReference type="PRO" id="PR:P0A4C8"/>
<dbReference type="Proteomes" id="UP000000431">
    <property type="component" value="Chromosome"/>
</dbReference>
<dbReference type="GO" id="GO:0022627">
    <property type="term" value="C:cytosolic small ribosomal subunit"/>
    <property type="evidence" value="ECO:0000318"/>
    <property type="project" value="GO_Central"/>
</dbReference>
<dbReference type="GO" id="GO:0019843">
    <property type="term" value="F:rRNA binding"/>
    <property type="evidence" value="ECO:0007669"/>
    <property type="project" value="UniProtKB-UniRule"/>
</dbReference>
<dbReference type="GO" id="GO:0003735">
    <property type="term" value="F:structural constituent of ribosome"/>
    <property type="evidence" value="ECO:0000318"/>
    <property type="project" value="GO_Central"/>
</dbReference>
<dbReference type="GO" id="GO:0006412">
    <property type="term" value="P:translation"/>
    <property type="evidence" value="ECO:0000318"/>
    <property type="project" value="GO_Central"/>
</dbReference>
<dbReference type="FunFam" id="3.30.160.20:FF:000066">
    <property type="entry name" value="30S ribosomal protein S5"/>
    <property type="match status" value="1"/>
</dbReference>
<dbReference type="FunFam" id="3.30.230.10:FF:000002">
    <property type="entry name" value="30S ribosomal protein S5"/>
    <property type="match status" value="1"/>
</dbReference>
<dbReference type="Gene3D" id="3.30.160.20">
    <property type="match status" value="1"/>
</dbReference>
<dbReference type="Gene3D" id="3.30.230.10">
    <property type="match status" value="1"/>
</dbReference>
<dbReference type="HAMAP" id="MF_01307_B">
    <property type="entry name" value="Ribosomal_uS5_B"/>
    <property type="match status" value="1"/>
</dbReference>
<dbReference type="InterPro" id="IPR020568">
    <property type="entry name" value="Ribosomal_Su5_D2-typ_SF"/>
</dbReference>
<dbReference type="InterPro" id="IPR000851">
    <property type="entry name" value="Ribosomal_uS5"/>
</dbReference>
<dbReference type="InterPro" id="IPR005712">
    <property type="entry name" value="Ribosomal_uS5_bac-type"/>
</dbReference>
<dbReference type="InterPro" id="IPR005324">
    <property type="entry name" value="Ribosomal_uS5_C"/>
</dbReference>
<dbReference type="InterPro" id="IPR013810">
    <property type="entry name" value="Ribosomal_uS5_N"/>
</dbReference>
<dbReference type="InterPro" id="IPR018192">
    <property type="entry name" value="Ribosomal_uS5_N_CS"/>
</dbReference>
<dbReference type="InterPro" id="IPR014721">
    <property type="entry name" value="Ribsml_uS5_D2-typ_fold_subgr"/>
</dbReference>
<dbReference type="NCBIfam" id="TIGR01021">
    <property type="entry name" value="rpsE_bact"/>
    <property type="match status" value="1"/>
</dbReference>
<dbReference type="PANTHER" id="PTHR48277">
    <property type="entry name" value="MITOCHONDRIAL RIBOSOMAL PROTEIN S5"/>
    <property type="match status" value="1"/>
</dbReference>
<dbReference type="PANTHER" id="PTHR48277:SF1">
    <property type="entry name" value="MITOCHONDRIAL RIBOSOMAL PROTEIN S5"/>
    <property type="match status" value="1"/>
</dbReference>
<dbReference type="Pfam" id="PF00333">
    <property type="entry name" value="Ribosomal_S5"/>
    <property type="match status" value="1"/>
</dbReference>
<dbReference type="Pfam" id="PF03719">
    <property type="entry name" value="Ribosomal_S5_C"/>
    <property type="match status" value="1"/>
</dbReference>
<dbReference type="SUPFAM" id="SSF54768">
    <property type="entry name" value="dsRNA-binding domain-like"/>
    <property type="match status" value="1"/>
</dbReference>
<dbReference type="SUPFAM" id="SSF54211">
    <property type="entry name" value="Ribosomal protein S5 domain 2-like"/>
    <property type="match status" value="1"/>
</dbReference>
<dbReference type="PROSITE" id="PS00585">
    <property type="entry name" value="RIBOSOMAL_S5"/>
    <property type="match status" value="1"/>
</dbReference>
<dbReference type="PROSITE" id="PS50881">
    <property type="entry name" value="S5_DSRBD"/>
    <property type="match status" value="1"/>
</dbReference>
<reference key="1">
    <citation type="journal article" date="1992" name="J. Bacteriol.">
        <title>Cloning and sequence analysis of the Chlamydia trachomatis spc ribosomal protein gene cluster.</title>
        <authorList>
            <person name="Kaul R."/>
            <person name="Gray G.J."/>
            <person name="Koehncke N.R."/>
            <person name="Gu L.J."/>
        </authorList>
    </citation>
    <scope>NUCLEOTIDE SEQUENCE [GENOMIC DNA]</scope>
    <source>
        <strain>L2/434/Bu</strain>
    </source>
</reference>
<reference key="2">
    <citation type="journal article" date="1998" name="Science">
        <title>Genome sequence of an obligate intracellular pathogen of humans: Chlamydia trachomatis.</title>
        <authorList>
            <person name="Stephens R.S."/>
            <person name="Kalman S."/>
            <person name="Lammel C.J."/>
            <person name="Fan J."/>
            <person name="Marathe R."/>
            <person name="Aravind L."/>
            <person name="Mitchell W.P."/>
            <person name="Olinger L."/>
            <person name="Tatusov R.L."/>
            <person name="Zhao Q."/>
            <person name="Koonin E.V."/>
            <person name="Davis R.W."/>
        </authorList>
    </citation>
    <scope>NUCLEOTIDE SEQUENCE [LARGE SCALE GENOMIC DNA]</scope>
    <source>
        <strain>ATCC VR-885 / DSM 19411 / UW-3/Cx</strain>
    </source>
</reference>
<organism>
    <name type="scientific">Chlamydia trachomatis serovar D (strain ATCC VR-885 / DSM 19411 / UW-3/Cx)</name>
    <dbReference type="NCBI Taxonomy" id="272561"/>
    <lineage>
        <taxon>Bacteria</taxon>
        <taxon>Pseudomonadati</taxon>
        <taxon>Chlamydiota</taxon>
        <taxon>Chlamydiia</taxon>
        <taxon>Chlamydiales</taxon>
        <taxon>Chlamydiaceae</taxon>
        <taxon>Chlamydia/Chlamydophila group</taxon>
        <taxon>Chlamydia</taxon>
    </lineage>
</organism>